<feature type="chain" id="PRO_0000114455" description="3-hydroxy-3-methylglutaryl-coenzyme A reductase">
    <location>
        <begin position="1"/>
        <end position="1053"/>
    </location>
</feature>
<feature type="topological domain" description="Cytoplasmic" evidence="1">
    <location>
        <begin position="1"/>
        <end position="8"/>
    </location>
</feature>
<feature type="transmembrane region" description="Helical" evidence="2">
    <location>
        <begin position="9"/>
        <end position="29"/>
    </location>
</feature>
<feature type="topological domain" description="Lumenal" evidence="1">
    <location>
        <begin position="30"/>
        <end position="203"/>
    </location>
</feature>
<feature type="transmembrane region" description="Helical" evidence="2">
    <location>
        <begin position="204"/>
        <end position="224"/>
    </location>
</feature>
<feature type="topological domain" description="Cytoplasmic" evidence="1">
    <location>
        <begin position="225"/>
        <end position="232"/>
    </location>
</feature>
<feature type="transmembrane region" description="Helical" evidence="2">
    <location>
        <begin position="233"/>
        <end position="253"/>
    </location>
</feature>
<feature type="topological domain" description="Lumenal" evidence="1">
    <location>
        <begin position="254"/>
        <end position="258"/>
    </location>
</feature>
<feature type="transmembrane region" description="Helical" evidence="2">
    <location>
        <begin position="259"/>
        <end position="279"/>
    </location>
</feature>
<feature type="topological domain" description="Cytoplasmic" evidence="1">
    <location>
        <begin position="280"/>
        <end position="320"/>
    </location>
</feature>
<feature type="transmembrane region" description="Helical" evidence="2">
    <location>
        <begin position="321"/>
        <end position="341"/>
    </location>
</feature>
<feature type="transmembrane region" description="Helical" evidence="2">
    <location>
        <begin position="342"/>
        <end position="362"/>
    </location>
</feature>
<feature type="topological domain" description="Cytoplasmic" evidence="1">
    <location>
        <begin position="363"/>
        <end position="417"/>
    </location>
</feature>
<feature type="transmembrane region" description="Helical" evidence="2">
    <location>
        <begin position="418"/>
        <end position="438"/>
    </location>
</feature>
<feature type="topological domain" description="Lumenal" evidence="1">
    <location>
        <begin position="439"/>
        <end position="526"/>
    </location>
</feature>
<feature type="transmembrane region" description="Helical" evidence="2">
    <location>
        <begin position="527"/>
        <end position="547"/>
    </location>
</feature>
<feature type="topological domain" description="Cytoplasmic" evidence="1">
    <location>
        <begin position="548"/>
        <end position="1053"/>
    </location>
</feature>
<feature type="domain" description="SSD" evidence="3">
    <location>
        <begin position="204"/>
        <end position="365"/>
    </location>
</feature>
<feature type="region of interest" description="Disordered" evidence="5">
    <location>
        <begin position="1028"/>
        <end position="1053"/>
    </location>
</feature>
<feature type="active site" description="Charge relay system" evidence="1">
    <location>
        <position position="712"/>
    </location>
</feature>
<feature type="active site" description="Charge relay system" evidence="1">
    <location>
        <position position="846"/>
    </location>
</feature>
<feature type="active site" description="Charge relay system" evidence="1">
    <location>
        <position position="922"/>
    </location>
</feature>
<feature type="active site" description="Proton donor" evidence="4">
    <location>
        <position position="1018"/>
    </location>
</feature>
<feature type="binding site" evidence="1">
    <location>
        <begin position="718"/>
        <end position="724"/>
    </location>
    <ligand>
        <name>CoA</name>
        <dbReference type="ChEBI" id="CHEBI:57287"/>
    </ligand>
</feature>
<feature type="binding site" evidence="1">
    <location>
        <begin position="779"/>
        <end position="781"/>
    </location>
    <ligand>
        <name>NADP(+)</name>
        <dbReference type="ChEBI" id="CHEBI:58349"/>
    </ligand>
</feature>
<feature type="binding site" evidence="1">
    <location>
        <begin position="806"/>
        <end position="814"/>
    </location>
    <ligand>
        <name>NADP(+)</name>
        <dbReference type="ChEBI" id="CHEBI:58349"/>
    </ligand>
</feature>
<feature type="binding site" evidence="1">
    <location>
        <begin position="875"/>
        <end position="877"/>
    </location>
    <ligand>
        <name>CoA</name>
        <dbReference type="ChEBI" id="CHEBI:57287"/>
    </ligand>
</feature>
<feature type="binding site" evidence="1">
    <location>
        <begin position="1017"/>
        <end position="1018"/>
    </location>
    <ligand>
        <name>CoA</name>
        <dbReference type="ChEBI" id="CHEBI:57287"/>
    </ligand>
</feature>
<feature type="binding site" evidence="1">
    <location>
        <begin position="1022"/>
        <end position="1023"/>
    </location>
    <ligand>
        <name>NADP(+)</name>
        <dbReference type="ChEBI" id="CHEBI:58349"/>
    </ligand>
</feature>
<feature type="modified residue" description="Phosphoserine" evidence="6">
    <location>
        <position position="1024"/>
    </location>
</feature>
<feature type="modified residue" description="Phosphothreonine" evidence="6">
    <location>
        <position position="1028"/>
    </location>
</feature>
<feature type="glycosylation site" description="N-linked (GlcNAc...) asparagine" evidence="2">
    <location>
        <position position="137"/>
    </location>
</feature>
<feature type="glycosylation site" description="N-linked (GlcNAc...) asparagine" evidence="2">
    <location>
        <position position="518"/>
    </location>
</feature>
<feature type="sequence conflict" description="In Ref. 1; AAB39277." evidence="10" ref="1">
    <original>N</original>
    <variation>D</variation>
    <location>
        <position position="751"/>
    </location>
</feature>
<dbReference type="EC" id="1.1.1.34" evidence="11"/>
<dbReference type="EMBL" id="L76979">
    <property type="protein sequence ID" value="AAB39277.1"/>
    <property type="molecule type" value="Genomic_DNA"/>
</dbReference>
<dbReference type="EMBL" id="CU329672">
    <property type="protein sequence ID" value="CAA19589.1"/>
    <property type="molecule type" value="Genomic_DNA"/>
</dbReference>
<dbReference type="PIR" id="S72194">
    <property type="entry name" value="S72194"/>
</dbReference>
<dbReference type="RefSeq" id="NP_588235.1">
    <property type="nucleotide sequence ID" value="NM_001023225.2"/>
</dbReference>
<dbReference type="SMR" id="Q10283"/>
<dbReference type="BioGRID" id="275573">
    <property type="interactions" value="11"/>
</dbReference>
<dbReference type="FunCoup" id="Q10283">
    <property type="interactions" value="203"/>
</dbReference>
<dbReference type="STRING" id="284812.Q10283"/>
<dbReference type="BindingDB" id="Q10283"/>
<dbReference type="ChEMBL" id="CHEMBL1163121"/>
<dbReference type="ChEMBL" id="CHEMBL4804261"/>
<dbReference type="DrugCentral" id="Q10283"/>
<dbReference type="GlyCosmos" id="Q10283">
    <property type="glycosylation" value="2 sites, No reported glycans"/>
</dbReference>
<dbReference type="iPTMnet" id="Q10283"/>
<dbReference type="PaxDb" id="4896-SPCC162.09c.1"/>
<dbReference type="EnsemblFungi" id="SPCC162.09c.1">
    <property type="protein sequence ID" value="SPCC162.09c.1:pep"/>
    <property type="gene ID" value="SPCC162.09c"/>
</dbReference>
<dbReference type="GeneID" id="2538999"/>
<dbReference type="KEGG" id="spo:2538999"/>
<dbReference type="PomBase" id="SPCC162.09c">
    <property type="gene designation" value="hmg1"/>
</dbReference>
<dbReference type="VEuPathDB" id="FungiDB:SPCC162.09c"/>
<dbReference type="eggNOG" id="KOG2480">
    <property type="taxonomic scope" value="Eukaryota"/>
</dbReference>
<dbReference type="HOGENOM" id="CLU_001734_0_0_1"/>
<dbReference type="InParanoid" id="Q10283"/>
<dbReference type="OMA" id="KKWIMRA"/>
<dbReference type="PhylomeDB" id="Q10283"/>
<dbReference type="Reactome" id="R-SPO-191273">
    <property type="pathway name" value="Cholesterol biosynthesis"/>
</dbReference>
<dbReference type="UniPathway" id="UPA00058">
    <property type="reaction ID" value="UER00103"/>
</dbReference>
<dbReference type="PRO" id="PR:Q10283"/>
<dbReference type="Proteomes" id="UP000002485">
    <property type="component" value="Chromosome III"/>
</dbReference>
<dbReference type="GO" id="GO:0005783">
    <property type="term" value="C:endoplasmic reticulum"/>
    <property type="evidence" value="ECO:0007005"/>
    <property type="project" value="PomBase"/>
</dbReference>
<dbReference type="GO" id="GO:0005789">
    <property type="term" value="C:endoplasmic reticulum membrane"/>
    <property type="evidence" value="ECO:0000318"/>
    <property type="project" value="GO_Central"/>
</dbReference>
<dbReference type="GO" id="GO:0005635">
    <property type="term" value="C:nuclear envelope"/>
    <property type="evidence" value="ECO:0000314"/>
    <property type="project" value="PomBase"/>
</dbReference>
<dbReference type="GO" id="GO:0031965">
    <property type="term" value="C:nuclear membrane"/>
    <property type="evidence" value="ECO:0000250"/>
    <property type="project" value="PomBase"/>
</dbReference>
<dbReference type="GO" id="GO:0042175">
    <property type="term" value="C:nuclear outer membrane-endoplasmic reticulum membrane network"/>
    <property type="evidence" value="ECO:0000314"/>
    <property type="project" value="PomBase"/>
</dbReference>
<dbReference type="GO" id="GO:0005778">
    <property type="term" value="C:peroxisomal membrane"/>
    <property type="evidence" value="ECO:0000318"/>
    <property type="project" value="GO_Central"/>
</dbReference>
<dbReference type="GO" id="GO:0004420">
    <property type="term" value="F:hydroxymethylglutaryl-CoA reductase (NADPH) activity"/>
    <property type="evidence" value="ECO:0000314"/>
    <property type="project" value="PomBase"/>
</dbReference>
<dbReference type="GO" id="GO:0032935">
    <property type="term" value="F:sterol sensor activity"/>
    <property type="evidence" value="ECO:0000304"/>
    <property type="project" value="PomBase"/>
</dbReference>
<dbReference type="GO" id="GO:0015936">
    <property type="term" value="P:coenzyme A metabolic process"/>
    <property type="evidence" value="ECO:0007669"/>
    <property type="project" value="InterPro"/>
</dbReference>
<dbReference type="GO" id="GO:0006696">
    <property type="term" value="P:ergosterol biosynthetic process"/>
    <property type="evidence" value="ECO:0000318"/>
    <property type="project" value="GO_Central"/>
</dbReference>
<dbReference type="GO" id="GO:0010142">
    <property type="term" value="P:farnesyl diphosphate biosynthetic process, mevalonate pathway"/>
    <property type="evidence" value="ECO:0000250"/>
    <property type="project" value="PomBase"/>
</dbReference>
<dbReference type="GO" id="GO:0019287">
    <property type="term" value="P:isopentenyl diphosphate biosynthetic process, mevalonate pathway"/>
    <property type="evidence" value="ECO:0000315"/>
    <property type="project" value="PomBase"/>
</dbReference>
<dbReference type="GO" id="GO:0008299">
    <property type="term" value="P:isoprenoid biosynthetic process"/>
    <property type="evidence" value="ECO:0000318"/>
    <property type="project" value="GO_Central"/>
</dbReference>
<dbReference type="CDD" id="cd00643">
    <property type="entry name" value="HMG-CoA_reductase_classI"/>
    <property type="match status" value="1"/>
</dbReference>
<dbReference type="FunFam" id="1.10.3270.10:FF:000001">
    <property type="entry name" value="3-hydroxy-3-methylglutaryl coenzyme A reductase"/>
    <property type="match status" value="1"/>
</dbReference>
<dbReference type="FunFam" id="3.30.70.420:FF:000001">
    <property type="entry name" value="3-hydroxy-3-methylglutaryl coenzyme A reductase"/>
    <property type="match status" value="1"/>
</dbReference>
<dbReference type="FunFam" id="3.90.770.10:FF:000001">
    <property type="entry name" value="3-hydroxy-3-methylglutaryl coenzyme A reductase"/>
    <property type="match status" value="1"/>
</dbReference>
<dbReference type="Gene3D" id="3.90.770.10">
    <property type="entry name" value="3-hydroxy-3-methylglutaryl-coenzyme A Reductase, Chain A, domain 2"/>
    <property type="match status" value="1"/>
</dbReference>
<dbReference type="Gene3D" id="1.10.3270.10">
    <property type="entry name" value="HMGR, N-terminal domain"/>
    <property type="match status" value="1"/>
</dbReference>
<dbReference type="Gene3D" id="3.30.70.420">
    <property type="entry name" value="Hydroxymethylglutaryl-CoA reductase, class I/II, NAD/NADP-binding domain"/>
    <property type="match status" value="1"/>
</dbReference>
<dbReference type="InterPro" id="IPR002202">
    <property type="entry name" value="HMG_CoA_Rdtase"/>
</dbReference>
<dbReference type="InterPro" id="IPR023074">
    <property type="entry name" value="HMG_CoA_Rdtase_cat_sf"/>
</dbReference>
<dbReference type="InterPro" id="IPR023076">
    <property type="entry name" value="HMG_CoA_Rdtase_CS"/>
</dbReference>
<dbReference type="InterPro" id="IPR004554">
    <property type="entry name" value="HMG_CoA_Rdtase_eu_arc"/>
</dbReference>
<dbReference type="InterPro" id="IPR023282">
    <property type="entry name" value="HMG_CoA_Rdtase_N"/>
</dbReference>
<dbReference type="InterPro" id="IPR009023">
    <property type="entry name" value="HMG_CoA_Rdtase_NAD(P)-bd_sf"/>
</dbReference>
<dbReference type="InterPro" id="IPR009029">
    <property type="entry name" value="HMG_CoA_Rdtase_sub-bd_dom_sf"/>
</dbReference>
<dbReference type="InterPro" id="IPR053958">
    <property type="entry name" value="HMGCR/SNAP/NPC1-like_SSD"/>
</dbReference>
<dbReference type="InterPro" id="IPR000731">
    <property type="entry name" value="SSD"/>
</dbReference>
<dbReference type="NCBIfam" id="TIGR00533">
    <property type="entry name" value="HMG_CoA_R_NADP"/>
    <property type="match status" value="1"/>
</dbReference>
<dbReference type="PANTHER" id="PTHR10572">
    <property type="entry name" value="3-HYDROXY-3-METHYLGLUTARYL-COENZYME A REDUCTASE"/>
    <property type="match status" value="1"/>
</dbReference>
<dbReference type="PANTHER" id="PTHR10572:SF24">
    <property type="entry name" value="3-HYDROXY-3-METHYLGLUTARYL-COENZYME A REDUCTASE"/>
    <property type="match status" value="1"/>
</dbReference>
<dbReference type="Pfam" id="PF00368">
    <property type="entry name" value="HMG-CoA_red"/>
    <property type="match status" value="1"/>
</dbReference>
<dbReference type="Pfam" id="PF12349">
    <property type="entry name" value="Sterol-sensing"/>
    <property type="match status" value="1"/>
</dbReference>
<dbReference type="PRINTS" id="PR00071">
    <property type="entry name" value="HMGCOARDTASE"/>
</dbReference>
<dbReference type="SUPFAM" id="SSF55035">
    <property type="entry name" value="NAD-binding domain of HMG-CoA reductase"/>
    <property type="match status" value="1"/>
</dbReference>
<dbReference type="SUPFAM" id="SSF56542">
    <property type="entry name" value="Substrate-binding domain of HMG-CoA reductase"/>
    <property type="match status" value="1"/>
</dbReference>
<dbReference type="PROSITE" id="PS00066">
    <property type="entry name" value="HMG_COA_REDUCTASE_1"/>
    <property type="match status" value="1"/>
</dbReference>
<dbReference type="PROSITE" id="PS00318">
    <property type="entry name" value="HMG_COA_REDUCTASE_2"/>
    <property type="match status" value="1"/>
</dbReference>
<dbReference type="PROSITE" id="PS50065">
    <property type="entry name" value="HMG_COA_REDUCTASE_4"/>
    <property type="match status" value="1"/>
</dbReference>
<dbReference type="PROSITE" id="PS50156">
    <property type="entry name" value="SSD"/>
    <property type="match status" value="1"/>
</dbReference>
<protein>
    <recommendedName>
        <fullName evidence="9">3-hydroxy-3-methylglutaryl-coenzyme A reductase</fullName>
        <shortName evidence="9">HMG-CoA reductase</shortName>
        <ecNumber evidence="11">1.1.1.34</ecNumber>
    </recommendedName>
</protein>
<comment type="function">
    <text evidence="7 8 10">Part of the first module of ergosterol biosynthesis pathway that includes the early steps of the pathway, conserved across all eukaryotes, and which results in the formation of mevalonate from acetyl-coenzyme A (acetyl-CoA) (PubMed:19486165, PubMed:8896278). Hmg1 catalyzes the reduction of hydroxymethylglutaryl-CoA (HMG-CoA) to mevalonate (PubMed:19486165, PubMed:8896278). The first module starts with the action of the cytosolic acetyl-CoA acetyltransferase eg10 that catalyzes the formation of acetoacetyl-CoA. The hydroxymethylglutaryl-CoA synthases erg13 then condenses acetyl-CoA with acetoacetyl-CoA to form HMG-CoA. The rate-limiting step of the early module is the reduction to mevalonate by the 3-hydroxy-3-methylglutaryl-coenzyme A (HMG-CoA) reductases hcs1 (Probable).</text>
</comment>
<comment type="catalytic activity">
    <reaction evidence="11">
        <text>(R)-mevalonate + 2 NADP(+) + CoA = (3S)-3-hydroxy-3-methylglutaryl-CoA + 2 NADPH + 2 H(+)</text>
        <dbReference type="Rhea" id="RHEA:15989"/>
        <dbReference type="ChEBI" id="CHEBI:15378"/>
        <dbReference type="ChEBI" id="CHEBI:36464"/>
        <dbReference type="ChEBI" id="CHEBI:43074"/>
        <dbReference type="ChEBI" id="CHEBI:57287"/>
        <dbReference type="ChEBI" id="CHEBI:57783"/>
        <dbReference type="ChEBI" id="CHEBI:58349"/>
        <dbReference type="EC" id="1.1.1.34"/>
    </reaction>
    <physiologicalReaction direction="right-to-left" evidence="11">
        <dbReference type="Rhea" id="RHEA:15991"/>
    </physiologicalReaction>
</comment>
<comment type="pathway">
    <text evidence="11">Metabolic intermediate biosynthesis; (R)-mevalonate biosynthesis; (R)-mevalonate from acetyl-CoA: step 3/3.</text>
</comment>
<comment type="subcellular location">
    <subcellularLocation>
        <location evidence="7">Endoplasmic reticulum membrane</location>
        <topology evidence="7">Multi-pass membrane protein</topology>
    </subcellularLocation>
    <subcellularLocation>
        <location evidence="7">Nucleus envelope</location>
    </subcellularLocation>
</comment>
<comment type="similarity">
    <text evidence="10">Belongs to the HMG-CoA reductase family.</text>
</comment>
<proteinExistence type="evidence at protein level"/>
<sequence length="1053" mass="114877">MIYKLAARYPIQVIAIVGILVSMAYFSFLEALTQEDFPVLIRALKRFGILDGFPNTRLPNEMILKLSSVQGEDASVWEQIPAAELGGEGFVDFDITQWYYPANAKVDVAQLVEPYRNDCIFHDASGACHFFFKEVGNWTVSSIALPSNLANPPIDYFLDSSSTVIQRILPAIREHGISWSWLLQLIARTWMNTLKIASQASKTELLIVGTAYACMLISIVSLYLKMRRLGSKFWLFFSVLLSTLFSVQFAMTLVRASGVRISLVSLIESLPFLINVVALDKAAELTRQVITRCSVSDSHSPMHEDIAKACRNAAPPILRHFSFGIVVLAIFSYCNFGIKQFFLFAAVMIYDLLLLFSFFVAILTLKLEMRRYNAKDDVRKVLIEEGLSESTARHVADGNDSSATTSAGSRYFKVRYGTKIILFIFIAFNLFELCSIPFKHYAATSAAAARLIPLVRSQYPDFKSQRLLDDGVFDDVLSAISSMSNIESPSVRLLPAVFYGAELSSTSFLSTIHSFINNWSHYISASFLSKWIVCALSLSIAVNVFLLNAARLNSIKEEPEKKVVEKVVEVVKYIPSSNSSSIDDIQKDEIAQESVVRSLEECITLYNNGQISTLNDEEVVQLTLAKKIPLYALERVLKDVTRAVVIRRTVVSRSSRTKTLESSNCPVYHYDYSRVLNACCENVIGYMPLPLGVAGPLIIDGKPFYIPMATTEGALVASTMRGCKAINAGGGAVTVLTRDQMSRGPCVAFPNLTRAGRAKIWLDSPEGQEVMKKAFNSTSRFARLQHIKTALAGTRLFIRFCTSTGDAMGMNMISKGVEHALVVMSNDAGFDDMQVISVSGNYCTDKKPAAINWIDGRGKSVIAEAIIPGDAVKSVLKTTVEDLVKLNVDKNLIGSAMAGSVGGFNAHAANIVTAVYLATGQDPAQNVESSNCITLMDNVDGNLQLSVSMPSIEVGTIGGGTVLEPQGAMLDLLGVRGAHMTSPGDNSRQLARVVAAAVMAGELSLCSALASGHLVKSHIGLNRSALNTPAMDSSAKKPATDALKSVNSRVPGR</sequence>
<reference key="1">
    <citation type="journal article" date="1996" name="Yeast">
        <title>Molecular, functional and evolutionary characterization of the gene encoding HMG-CoA reductase in the fission yeast, Schizosaccharomyces pombe.</title>
        <authorList>
            <person name="Lum P.Y."/>
            <person name="Edwards S."/>
            <person name="Wright R."/>
        </authorList>
    </citation>
    <scope>NUCLEOTIDE SEQUENCE [GENOMIC DNA]</scope>
    <scope>FUNCTION</scope>
    <scope>PATHWAY</scope>
</reference>
<reference key="2">
    <citation type="journal article" date="2002" name="Nature">
        <title>The genome sequence of Schizosaccharomyces pombe.</title>
        <authorList>
            <person name="Wood V."/>
            <person name="Gwilliam R."/>
            <person name="Rajandream M.A."/>
            <person name="Lyne M.H."/>
            <person name="Lyne R."/>
            <person name="Stewart A."/>
            <person name="Sgouros J.G."/>
            <person name="Peat N."/>
            <person name="Hayles J."/>
            <person name="Baker S.G."/>
            <person name="Basham D."/>
            <person name="Bowman S."/>
            <person name="Brooks K."/>
            <person name="Brown D."/>
            <person name="Brown S."/>
            <person name="Chillingworth T."/>
            <person name="Churcher C.M."/>
            <person name="Collins M."/>
            <person name="Connor R."/>
            <person name="Cronin A."/>
            <person name="Davis P."/>
            <person name="Feltwell T."/>
            <person name="Fraser A."/>
            <person name="Gentles S."/>
            <person name="Goble A."/>
            <person name="Hamlin N."/>
            <person name="Harris D.E."/>
            <person name="Hidalgo J."/>
            <person name="Hodgson G."/>
            <person name="Holroyd S."/>
            <person name="Hornsby T."/>
            <person name="Howarth S."/>
            <person name="Huckle E.J."/>
            <person name="Hunt S."/>
            <person name="Jagels K."/>
            <person name="James K.D."/>
            <person name="Jones L."/>
            <person name="Jones M."/>
            <person name="Leather S."/>
            <person name="McDonald S."/>
            <person name="McLean J."/>
            <person name="Mooney P."/>
            <person name="Moule S."/>
            <person name="Mungall K.L."/>
            <person name="Murphy L.D."/>
            <person name="Niblett D."/>
            <person name="Odell C."/>
            <person name="Oliver K."/>
            <person name="O'Neil S."/>
            <person name="Pearson D."/>
            <person name="Quail M.A."/>
            <person name="Rabbinowitsch E."/>
            <person name="Rutherford K.M."/>
            <person name="Rutter S."/>
            <person name="Saunders D."/>
            <person name="Seeger K."/>
            <person name="Sharp S."/>
            <person name="Skelton J."/>
            <person name="Simmonds M.N."/>
            <person name="Squares R."/>
            <person name="Squares S."/>
            <person name="Stevens K."/>
            <person name="Taylor K."/>
            <person name="Taylor R.G."/>
            <person name="Tivey A."/>
            <person name="Walsh S.V."/>
            <person name="Warren T."/>
            <person name="Whitehead S."/>
            <person name="Woodward J.R."/>
            <person name="Volckaert G."/>
            <person name="Aert R."/>
            <person name="Robben J."/>
            <person name="Grymonprez B."/>
            <person name="Weltjens I."/>
            <person name="Vanstreels E."/>
            <person name="Rieger M."/>
            <person name="Schaefer M."/>
            <person name="Mueller-Auer S."/>
            <person name="Gabel C."/>
            <person name="Fuchs M."/>
            <person name="Duesterhoeft A."/>
            <person name="Fritzc C."/>
            <person name="Holzer E."/>
            <person name="Moestl D."/>
            <person name="Hilbert H."/>
            <person name="Borzym K."/>
            <person name="Langer I."/>
            <person name="Beck A."/>
            <person name="Lehrach H."/>
            <person name="Reinhardt R."/>
            <person name="Pohl T.M."/>
            <person name="Eger P."/>
            <person name="Zimmermann W."/>
            <person name="Wedler H."/>
            <person name="Wambutt R."/>
            <person name="Purnelle B."/>
            <person name="Goffeau A."/>
            <person name="Cadieu E."/>
            <person name="Dreano S."/>
            <person name="Gloux S."/>
            <person name="Lelaure V."/>
            <person name="Mottier S."/>
            <person name="Galibert F."/>
            <person name="Aves S.J."/>
            <person name="Xiang Z."/>
            <person name="Hunt C."/>
            <person name="Moore K."/>
            <person name="Hurst S.M."/>
            <person name="Lucas M."/>
            <person name="Rochet M."/>
            <person name="Gaillardin C."/>
            <person name="Tallada V.A."/>
            <person name="Garzon A."/>
            <person name="Thode G."/>
            <person name="Daga R.R."/>
            <person name="Cruzado L."/>
            <person name="Jimenez J."/>
            <person name="Sanchez M."/>
            <person name="del Rey F."/>
            <person name="Benito J."/>
            <person name="Dominguez A."/>
            <person name="Revuelta J.L."/>
            <person name="Moreno S."/>
            <person name="Armstrong J."/>
            <person name="Forsburg S.L."/>
            <person name="Cerutti L."/>
            <person name="Lowe T."/>
            <person name="McCombie W.R."/>
            <person name="Paulsen I."/>
            <person name="Potashkin J."/>
            <person name="Shpakovski G.V."/>
            <person name="Ussery D."/>
            <person name="Barrell B.G."/>
            <person name="Nurse P."/>
        </authorList>
    </citation>
    <scope>NUCLEOTIDE SEQUENCE [LARGE SCALE GENOMIC DNA]</scope>
    <source>
        <strain>972 / ATCC 24843</strain>
    </source>
</reference>
<reference key="3">
    <citation type="journal article" date="2008" name="J. Proteome Res.">
        <title>Phosphoproteome analysis of fission yeast.</title>
        <authorList>
            <person name="Wilson-Grady J.T."/>
            <person name="Villen J."/>
            <person name="Gygi S.P."/>
        </authorList>
    </citation>
    <scope>PHOSPHORYLATION [LARGE SCALE ANALYSIS] AT SER-1024 AND THR-1028</scope>
    <scope>IDENTIFICATION BY MASS SPECTROMETRY</scope>
</reference>
<reference key="4">
    <citation type="journal article" date="2009" name="Genes Cells">
        <title>Pleiotropic phenotypes caused by an opal nonsense mutation in an essential gene encoding HMG-CoA reductase in fission yeast.</title>
        <authorList>
            <person name="Fang Y."/>
            <person name="Imagawa K."/>
            <person name="Zhou X."/>
            <person name="Kita A."/>
            <person name="Sugiura R."/>
            <person name="Jaiseng W."/>
            <person name="Kuno T."/>
        </authorList>
    </citation>
    <scope>FUNCTION</scope>
    <scope>SUBCELLULAR LOCATION</scope>
</reference>
<accession>Q10283</accession>
<accession>O74425</accession>
<evidence type="ECO:0000250" key="1">
    <source>
        <dbReference type="UniProtKB" id="P04035"/>
    </source>
</evidence>
<evidence type="ECO:0000255" key="2"/>
<evidence type="ECO:0000255" key="3">
    <source>
        <dbReference type="PROSITE-ProRule" id="PRU00199"/>
    </source>
</evidence>
<evidence type="ECO:0000255" key="4">
    <source>
        <dbReference type="PROSITE-ProRule" id="PRU10003"/>
    </source>
</evidence>
<evidence type="ECO:0000256" key="5">
    <source>
        <dbReference type="SAM" id="MobiDB-lite"/>
    </source>
</evidence>
<evidence type="ECO:0000269" key="6">
    <source>
    </source>
</evidence>
<evidence type="ECO:0000269" key="7">
    <source>
    </source>
</evidence>
<evidence type="ECO:0000269" key="8">
    <source>
    </source>
</evidence>
<evidence type="ECO:0000303" key="9">
    <source>
    </source>
</evidence>
<evidence type="ECO:0000305" key="10"/>
<evidence type="ECO:0000305" key="11">
    <source>
    </source>
</evidence>
<organism>
    <name type="scientific">Schizosaccharomyces pombe (strain 972 / ATCC 24843)</name>
    <name type="common">Fission yeast</name>
    <dbReference type="NCBI Taxonomy" id="284812"/>
    <lineage>
        <taxon>Eukaryota</taxon>
        <taxon>Fungi</taxon>
        <taxon>Dikarya</taxon>
        <taxon>Ascomycota</taxon>
        <taxon>Taphrinomycotina</taxon>
        <taxon>Schizosaccharomycetes</taxon>
        <taxon>Schizosaccharomycetales</taxon>
        <taxon>Schizosaccharomycetaceae</taxon>
        <taxon>Schizosaccharomyces</taxon>
    </lineage>
</organism>
<keyword id="KW-0256">Endoplasmic reticulum</keyword>
<keyword id="KW-0325">Glycoprotein</keyword>
<keyword id="KW-0444">Lipid biosynthesis</keyword>
<keyword id="KW-0443">Lipid metabolism</keyword>
<keyword id="KW-0472">Membrane</keyword>
<keyword id="KW-0521">NADP</keyword>
<keyword id="KW-0539">Nucleus</keyword>
<keyword id="KW-0560">Oxidoreductase</keyword>
<keyword id="KW-0597">Phosphoprotein</keyword>
<keyword id="KW-1185">Reference proteome</keyword>
<keyword id="KW-0752">Steroid biosynthesis</keyword>
<keyword id="KW-0753">Steroid metabolism</keyword>
<keyword id="KW-0756">Sterol biosynthesis</keyword>
<keyword id="KW-1207">Sterol metabolism</keyword>
<keyword id="KW-0812">Transmembrane</keyword>
<keyword id="KW-1133">Transmembrane helix</keyword>
<name>HMDH_SCHPO</name>
<gene>
    <name evidence="9" type="primary">hmg1</name>
    <name type="synonym">its12</name>
    <name type="ORF">SPCC162.09c</name>
</gene>